<dbReference type="EC" id="2.7.11.1" evidence="5"/>
<dbReference type="EMBL" id="Z97343">
    <property type="protein sequence ID" value="CAB10546.1"/>
    <property type="status" value="ALT_INIT"/>
    <property type="molecule type" value="Genomic_DNA"/>
</dbReference>
<dbReference type="EMBL" id="AL161546">
    <property type="protein sequence ID" value="CAB78769.1"/>
    <property type="status" value="ALT_INIT"/>
    <property type="molecule type" value="Genomic_DNA"/>
</dbReference>
<dbReference type="EMBL" id="CP002687">
    <property type="protein sequence ID" value="AEE83930.1"/>
    <property type="molecule type" value="Genomic_DNA"/>
</dbReference>
<dbReference type="PIR" id="E71446">
    <property type="entry name" value="E71446"/>
</dbReference>
<dbReference type="RefSeq" id="NP_193501.2">
    <property type="nucleotide sequence ID" value="NM_117874.3"/>
</dbReference>
<dbReference type="SMR" id="F4JPX3"/>
<dbReference type="FunCoup" id="F4JPX3">
    <property type="interactions" value="2"/>
</dbReference>
<dbReference type="STRING" id="3702.F4JPX3"/>
<dbReference type="iPTMnet" id="F4JPX3"/>
<dbReference type="PaxDb" id="3702-AT4G17660.1"/>
<dbReference type="ProteomicsDB" id="236660"/>
<dbReference type="EnsemblPlants" id="AT4G17660.1">
    <property type="protein sequence ID" value="AT4G17660.1"/>
    <property type="gene ID" value="AT4G17660"/>
</dbReference>
<dbReference type="GeneID" id="827486"/>
<dbReference type="Gramene" id="AT4G17660.1">
    <property type="protein sequence ID" value="AT4G17660.1"/>
    <property type="gene ID" value="AT4G17660"/>
</dbReference>
<dbReference type="KEGG" id="ath:AT4G17660"/>
<dbReference type="Araport" id="AT4G17660"/>
<dbReference type="TAIR" id="AT4G17660">
    <property type="gene designation" value="PBL20"/>
</dbReference>
<dbReference type="eggNOG" id="KOG1187">
    <property type="taxonomic scope" value="Eukaryota"/>
</dbReference>
<dbReference type="HOGENOM" id="CLU_000288_21_13_1"/>
<dbReference type="InParanoid" id="F4JPX3"/>
<dbReference type="OMA" id="SDATCEF"/>
<dbReference type="OrthoDB" id="4062651at2759"/>
<dbReference type="PRO" id="PR:F4JPX3"/>
<dbReference type="Proteomes" id="UP000006548">
    <property type="component" value="Chromosome 4"/>
</dbReference>
<dbReference type="ExpressionAtlas" id="F4JPX3">
    <property type="expression patterns" value="baseline and differential"/>
</dbReference>
<dbReference type="GO" id="GO:0005829">
    <property type="term" value="C:cytosol"/>
    <property type="evidence" value="ECO:0007005"/>
    <property type="project" value="TAIR"/>
</dbReference>
<dbReference type="GO" id="GO:0005886">
    <property type="term" value="C:plasma membrane"/>
    <property type="evidence" value="ECO:0007669"/>
    <property type="project" value="UniProtKB-SubCell"/>
</dbReference>
<dbReference type="GO" id="GO:0005524">
    <property type="term" value="F:ATP binding"/>
    <property type="evidence" value="ECO:0007669"/>
    <property type="project" value="UniProtKB-KW"/>
</dbReference>
<dbReference type="GO" id="GO:0106310">
    <property type="term" value="F:protein serine kinase activity"/>
    <property type="evidence" value="ECO:0007669"/>
    <property type="project" value="RHEA"/>
</dbReference>
<dbReference type="GO" id="GO:0004674">
    <property type="term" value="F:protein serine/threonine kinase activity"/>
    <property type="evidence" value="ECO:0007669"/>
    <property type="project" value="UniProtKB-KW"/>
</dbReference>
<dbReference type="GO" id="GO:0006952">
    <property type="term" value="P:defense response"/>
    <property type="evidence" value="ECO:0007669"/>
    <property type="project" value="UniProtKB-KW"/>
</dbReference>
<dbReference type="FunFam" id="1.10.510.10:FF:000095">
    <property type="entry name" value="protein STRUBBELIG-RECEPTOR FAMILY 8"/>
    <property type="match status" value="1"/>
</dbReference>
<dbReference type="FunFam" id="3.30.200.20:FF:000228">
    <property type="entry name" value="Serine/threonine-protein kinase BIK1"/>
    <property type="match status" value="1"/>
</dbReference>
<dbReference type="Gene3D" id="3.30.200.20">
    <property type="entry name" value="Phosphorylase Kinase, domain 1"/>
    <property type="match status" value="1"/>
</dbReference>
<dbReference type="Gene3D" id="1.10.510.10">
    <property type="entry name" value="Transferase(Phosphotransferase) domain 1"/>
    <property type="match status" value="1"/>
</dbReference>
<dbReference type="InterPro" id="IPR011009">
    <property type="entry name" value="Kinase-like_dom_sf"/>
</dbReference>
<dbReference type="InterPro" id="IPR050823">
    <property type="entry name" value="Plant_Ser_Thr_Prot_Kinase"/>
</dbReference>
<dbReference type="InterPro" id="IPR000719">
    <property type="entry name" value="Prot_kinase_dom"/>
</dbReference>
<dbReference type="InterPro" id="IPR017441">
    <property type="entry name" value="Protein_kinase_ATP_BS"/>
</dbReference>
<dbReference type="InterPro" id="IPR001245">
    <property type="entry name" value="Ser-Thr/Tyr_kinase_cat_dom"/>
</dbReference>
<dbReference type="InterPro" id="IPR008271">
    <property type="entry name" value="Ser/Thr_kinase_AS"/>
</dbReference>
<dbReference type="PANTHER" id="PTHR45621">
    <property type="entry name" value="OS01G0588500 PROTEIN-RELATED"/>
    <property type="match status" value="1"/>
</dbReference>
<dbReference type="Pfam" id="PF07714">
    <property type="entry name" value="PK_Tyr_Ser-Thr"/>
    <property type="match status" value="1"/>
</dbReference>
<dbReference type="SUPFAM" id="SSF56112">
    <property type="entry name" value="Protein kinase-like (PK-like)"/>
    <property type="match status" value="1"/>
</dbReference>
<dbReference type="PROSITE" id="PS00107">
    <property type="entry name" value="PROTEIN_KINASE_ATP"/>
    <property type="match status" value="1"/>
</dbReference>
<dbReference type="PROSITE" id="PS50011">
    <property type="entry name" value="PROTEIN_KINASE_DOM"/>
    <property type="match status" value="1"/>
</dbReference>
<dbReference type="PROSITE" id="PS00108">
    <property type="entry name" value="PROTEIN_KINASE_ST"/>
    <property type="match status" value="1"/>
</dbReference>
<evidence type="ECO:0000250" key="1">
    <source>
        <dbReference type="UniProtKB" id="O48814"/>
    </source>
</evidence>
<evidence type="ECO:0000250" key="2">
    <source>
        <dbReference type="UniProtKB" id="Q9FE20"/>
    </source>
</evidence>
<evidence type="ECO:0000255" key="3">
    <source>
        <dbReference type="PROSITE-ProRule" id="PRU00159"/>
    </source>
</evidence>
<evidence type="ECO:0000303" key="4">
    <source>
    </source>
</evidence>
<evidence type="ECO:0000305" key="5"/>
<evidence type="ECO:0000312" key="6">
    <source>
        <dbReference type="Araport" id="AT4G17660"/>
    </source>
</evidence>
<evidence type="ECO:0000312" key="7">
    <source>
        <dbReference type="EMBL" id="CAB10546.1"/>
    </source>
</evidence>
<protein>
    <recommendedName>
        <fullName evidence="5">Probable serine/threonine-protein kinase PBL20</fullName>
        <ecNumber evidence="5">2.7.11.1</ecNumber>
    </recommendedName>
    <alternativeName>
        <fullName evidence="4">PBS1-like protein 20</fullName>
    </alternativeName>
</protein>
<organism>
    <name type="scientific">Arabidopsis thaliana</name>
    <name type="common">Mouse-ear cress</name>
    <dbReference type="NCBI Taxonomy" id="3702"/>
    <lineage>
        <taxon>Eukaryota</taxon>
        <taxon>Viridiplantae</taxon>
        <taxon>Streptophyta</taxon>
        <taxon>Embryophyta</taxon>
        <taxon>Tracheophyta</taxon>
        <taxon>Spermatophyta</taxon>
        <taxon>Magnoliopsida</taxon>
        <taxon>eudicotyledons</taxon>
        <taxon>Gunneridae</taxon>
        <taxon>Pentapetalae</taxon>
        <taxon>rosids</taxon>
        <taxon>malvids</taxon>
        <taxon>Brassicales</taxon>
        <taxon>Brassicaceae</taxon>
        <taxon>Camelineae</taxon>
        <taxon>Arabidopsis</taxon>
    </lineage>
</organism>
<gene>
    <name evidence="4" type="primary">PBL20</name>
    <name evidence="6" type="ordered locus">At4g17660</name>
    <name evidence="7" type="ORF">dl4865w</name>
</gene>
<comment type="function">
    <text evidence="1">May be involved in plant defense signaling.</text>
</comment>
<comment type="catalytic activity">
    <reaction evidence="5">
        <text>L-seryl-[protein] + ATP = O-phospho-L-seryl-[protein] + ADP + H(+)</text>
        <dbReference type="Rhea" id="RHEA:17989"/>
        <dbReference type="Rhea" id="RHEA-COMP:9863"/>
        <dbReference type="Rhea" id="RHEA-COMP:11604"/>
        <dbReference type="ChEBI" id="CHEBI:15378"/>
        <dbReference type="ChEBI" id="CHEBI:29999"/>
        <dbReference type="ChEBI" id="CHEBI:30616"/>
        <dbReference type="ChEBI" id="CHEBI:83421"/>
        <dbReference type="ChEBI" id="CHEBI:456216"/>
        <dbReference type="EC" id="2.7.11.1"/>
    </reaction>
</comment>
<comment type="catalytic activity">
    <reaction evidence="5">
        <text>L-threonyl-[protein] + ATP = O-phospho-L-threonyl-[protein] + ADP + H(+)</text>
        <dbReference type="Rhea" id="RHEA:46608"/>
        <dbReference type="Rhea" id="RHEA-COMP:11060"/>
        <dbReference type="Rhea" id="RHEA-COMP:11605"/>
        <dbReference type="ChEBI" id="CHEBI:15378"/>
        <dbReference type="ChEBI" id="CHEBI:30013"/>
        <dbReference type="ChEBI" id="CHEBI:30616"/>
        <dbReference type="ChEBI" id="CHEBI:61977"/>
        <dbReference type="ChEBI" id="CHEBI:456216"/>
        <dbReference type="EC" id="2.7.11.1"/>
    </reaction>
</comment>
<comment type="subcellular location">
    <subcellularLocation>
        <location evidence="1">Cell membrane</location>
        <topology evidence="1">Lipid-anchor</topology>
    </subcellularLocation>
</comment>
<comment type="similarity">
    <text evidence="3">Belongs to the protein kinase superfamily. Ser/Thr protein kinase family.</text>
</comment>
<comment type="sequence caution" evidence="5">
    <conflict type="erroneous initiation">
        <sequence resource="EMBL-CDS" id="CAB10546"/>
    </conflict>
    <text>Truncated N-terminus.</text>
</comment>
<comment type="sequence caution" evidence="5">
    <conflict type="erroneous initiation">
        <sequence resource="EMBL-CDS" id="CAB78769"/>
    </conflict>
    <text>Truncated N-terminus.</text>
</comment>
<reference key="1">
    <citation type="journal article" date="1998" name="Nature">
        <title>Analysis of 1.9 Mb of contiguous sequence from chromosome 4 of Arabidopsis thaliana.</title>
        <authorList>
            <person name="Bevan M."/>
            <person name="Bancroft I."/>
            <person name="Bent E."/>
            <person name="Love K."/>
            <person name="Goodman H.M."/>
            <person name="Dean C."/>
            <person name="Bergkamp R."/>
            <person name="Dirkse W."/>
            <person name="van Staveren M."/>
            <person name="Stiekema W."/>
            <person name="Drost L."/>
            <person name="Ridley P."/>
            <person name="Hudson S.-A."/>
            <person name="Patel K."/>
            <person name="Murphy G."/>
            <person name="Piffanelli P."/>
            <person name="Wedler H."/>
            <person name="Wedler E."/>
            <person name="Wambutt R."/>
            <person name="Weitzenegger T."/>
            <person name="Pohl T."/>
            <person name="Terryn N."/>
            <person name="Gielen J."/>
            <person name="Villarroel R."/>
            <person name="De Clercq R."/>
            <person name="van Montagu M."/>
            <person name="Lecharny A."/>
            <person name="Aubourg S."/>
            <person name="Gy I."/>
            <person name="Kreis M."/>
            <person name="Lao N."/>
            <person name="Kavanagh T."/>
            <person name="Hempel S."/>
            <person name="Kotter P."/>
            <person name="Entian K.-D."/>
            <person name="Rieger M."/>
            <person name="Schaefer M."/>
            <person name="Funk B."/>
            <person name="Mueller-Auer S."/>
            <person name="Silvey M."/>
            <person name="James R."/>
            <person name="Monfort A."/>
            <person name="Pons A."/>
            <person name="Puigdomenech P."/>
            <person name="Douka A."/>
            <person name="Voukelatou E."/>
            <person name="Milioni D."/>
            <person name="Hatzopoulos P."/>
            <person name="Piravandi E."/>
            <person name="Obermaier B."/>
            <person name="Hilbert H."/>
            <person name="Duesterhoeft A."/>
            <person name="Moores T."/>
            <person name="Jones J.D.G."/>
            <person name="Eneva T."/>
            <person name="Palme K."/>
            <person name="Benes V."/>
            <person name="Rechmann S."/>
            <person name="Ansorge W."/>
            <person name="Cooke R."/>
            <person name="Berger C."/>
            <person name="Delseny M."/>
            <person name="Voet M."/>
            <person name="Volckaert G."/>
            <person name="Mewes H.-W."/>
            <person name="Klosterman S."/>
            <person name="Schueller C."/>
            <person name="Chalwatzis N."/>
        </authorList>
    </citation>
    <scope>NUCLEOTIDE SEQUENCE [LARGE SCALE GENOMIC DNA]</scope>
    <source>
        <strain>cv. Columbia</strain>
    </source>
</reference>
<reference key="2">
    <citation type="journal article" date="1999" name="Nature">
        <title>Sequence and analysis of chromosome 4 of the plant Arabidopsis thaliana.</title>
        <authorList>
            <person name="Mayer K.F.X."/>
            <person name="Schueller C."/>
            <person name="Wambutt R."/>
            <person name="Murphy G."/>
            <person name="Volckaert G."/>
            <person name="Pohl T."/>
            <person name="Duesterhoeft A."/>
            <person name="Stiekema W."/>
            <person name="Entian K.-D."/>
            <person name="Terryn N."/>
            <person name="Harris B."/>
            <person name="Ansorge W."/>
            <person name="Brandt P."/>
            <person name="Grivell L.A."/>
            <person name="Rieger M."/>
            <person name="Weichselgartner M."/>
            <person name="de Simone V."/>
            <person name="Obermaier B."/>
            <person name="Mache R."/>
            <person name="Mueller M."/>
            <person name="Kreis M."/>
            <person name="Delseny M."/>
            <person name="Puigdomenech P."/>
            <person name="Watson M."/>
            <person name="Schmidtheini T."/>
            <person name="Reichert B."/>
            <person name="Portetelle D."/>
            <person name="Perez-Alonso M."/>
            <person name="Boutry M."/>
            <person name="Bancroft I."/>
            <person name="Vos P."/>
            <person name="Hoheisel J."/>
            <person name="Zimmermann W."/>
            <person name="Wedler H."/>
            <person name="Ridley P."/>
            <person name="Langham S.-A."/>
            <person name="McCullagh B."/>
            <person name="Bilham L."/>
            <person name="Robben J."/>
            <person name="van der Schueren J."/>
            <person name="Grymonprez B."/>
            <person name="Chuang Y.-J."/>
            <person name="Vandenbussche F."/>
            <person name="Braeken M."/>
            <person name="Weltjens I."/>
            <person name="Voet M."/>
            <person name="Bastiaens I."/>
            <person name="Aert R."/>
            <person name="Defoor E."/>
            <person name="Weitzenegger T."/>
            <person name="Bothe G."/>
            <person name="Ramsperger U."/>
            <person name="Hilbert H."/>
            <person name="Braun M."/>
            <person name="Holzer E."/>
            <person name="Brandt A."/>
            <person name="Peters S."/>
            <person name="van Staveren M."/>
            <person name="Dirkse W."/>
            <person name="Mooijman P."/>
            <person name="Klein Lankhorst R."/>
            <person name="Rose M."/>
            <person name="Hauf J."/>
            <person name="Koetter P."/>
            <person name="Berneiser S."/>
            <person name="Hempel S."/>
            <person name="Feldpausch M."/>
            <person name="Lamberth S."/>
            <person name="Van den Daele H."/>
            <person name="De Keyser A."/>
            <person name="Buysshaert C."/>
            <person name="Gielen J."/>
            <person name="Villarroel R."/>
            <person name="De Clercq R."/>
            <person name="van Montagu M."/>
            <person name="Rogers J."/>
            <person name="Cronin A."/>
            <person name="Quail M.A."/>
            <person name="Bray-Allen S."/>
            <person name="Clark L."/>
            <person name="Doggett J."/>
            <person name="Hall S."/>
            <person name="Kay M."/>
            <person name="Lennard N."/>
            <person name="McLay K."/>
            <person name="Mayes R."/>
            <person name="Pettett A."/>
            <person name="Rajandream M.A."/>
            <person name="Lyne M."/>
            <person name="Benes V."/>
            <person name="Rechmann S."/>
            <person name="Borkova D."/>
            <person name="Bloecker H."/>
            <person name="Scharfe M."/>
            <person name="Grimm M."/>
            <person name="Loehnert T.-H."/>
            <person name="Dose S."/>
            <person name="de Haan M."/>
            <person name="Maarse A.C."/>
            <person name="Schaefer M."/>
            <person name="Mueller-Auer S."/>
            <person name="Gabel C."/>
            <person name="Fuchs M."/>
            <person name="Fartmann B."/>
            <person name="Granderath K."/>
            <person name="Dauner D."/>
            <person name="Herzl A."/>
            <person name="Neumann S."/>
            <person name="Argiriou A."/>
            <person name="Vitale D."/>
            <person name="Liguori R."/>
            <person name="Piravandi E."/>
            <person name="Massenet O."/>
            <person name="Quigley F."/>
            <person name="Clabauld G."/>
            <person name="Muendlein A."/>
            <person name="Felber R."/>
            <person name="Schnabl S."/>
            <person name="Hiller R."/>
            <person name="Schmidt W."/>
            <person name="Lecharny A."/>
            <person name="Aubourg S."/>
            <person name="Chefdor F."/>
            <person name="Cooke R."/>
            <person name="Berger C."/>
            <person name="Monfort A."/>
            <person name="Casacuberta E."/>
            <person name="Gibbons T."/>
            <person name="Weber N."/>
            <person name="Vandenbol M."/>
            <person name="Bargues M."/>
            <person name="Terol J."/>
            <person name="Torres A."/>
            <person name="Perez-Perez A."/>
            <person name="Purnelle B."/>
            <person name="Bent E."/>
            <person name="Johnson S."/>
            <person name="Tacon D."/>
            <person name="Jesse T."/>
            <person name="Heijnen L."/>
            <person name="Schwarz S."/>
            <person name="Scholler P."/>
            <person name="Heber S."/>
            <person name="Francs P."/>
            <person name="Bielke C."/>
            <person name="Frishman D."/>
            <person name="Haase D."/>
            <person name="Lemcke K."/>
            <person name="Mewes H.-W."/>
            <person name="Stocker S."/>
            <person name="Zaccaria P."/>
            <person name="Bevan M."/>
            <person name="Wilson R.K."/>
            <person name="de la Bastide M."/>
            <person name="Habermann K."/>
            <person name="Parnell L."/>
            <person name="Dedhia N."/>
            <person name="Gnoj L."/>
            <person name="Schutz K."/>
            <person name="Huang E."/>
            <person name="Spiegel L."/>
            <person name="Sekhon M."/>
            <person name="Murray J."/>
            <person name="Sheet P."/>
            <person name="Cordes M."/>
            <person name="Abu-Threideh J."/>
            <person name="Stoneking T."/>
            <person name="Kalicki J."/>
            <person name="Graves T."/>
            <person name="Harmon G."/>
            <person name="Edwards J."/>
            <person name="Latreille P."/>
            <person name="Courtney L."/>
            <person name="Cloud J."/>
            <person name="Abbott A."/>
            <person name="Scott K."/>
            <person name="Johnson D."/>
            <person name="Minx P."/>
            <person name="Bentley D."/>
            <person name="Fulton B."/>
            <person name="Miller N."/>
            <person name="Greco T."/>
            <person name="Kemp K."/>
            <person name="Kramer J."/>
            <person name="Fulton L."/>
            <person name="Mardis E."/>
            <person name="Dante M."/>
            <person name="Pepin K."/>
            <person name="Hillier L.W."/>
            <person name="Nelson J."/>
            <person name="Spieth J."/>
            <person name="Ryan E."/>
            <person name="Andrews S."/>
            <person name="Geisel C."/>
            <person name="Layman D."/>
            <person name="Du H."/>
            <person name="Ali J."/>
            <person name="Berghoff A."/>
            <person name="Jones K."/>
            <person name="Drone K."/>
            <person name="Cotton M."/>
            <person name="Joshu C."/>
            <person name="Antonoiu B."/>
            <person name="Zidanic M."/>
            <person name="Strong C."/>
            <person name="Sun H."/>
            <person name="Lamar B."/>
            <person name="Yordan C."/>
            <person name="Ma P."/>
            <person name="Zhong J."/>
            <person name="Preston R."/>
            <person name="Vil D."/>
            <person name="Shekher M."/>
            <person name="Matero A."/>
            <person name="Shah R."/>
            <person name="Swaby I.K."/>
            <person name="O'Shaughnessy A."/>
            <person name="Rodriguez M."/>
            <person name="Hoffman J."/>
            <person name="Till S."/>
            <person name="Granat S."/>
            <person name="Shohdy N."/>
            <person name="Hasegawa A."/>
            <person name="Hameed A."/>
            <person name="Lodhi M."/>
            <person name="Johnson A."/>
            <person name="Chen E."/>
            <person name="Marra M.A."/>
            <person name="Martienssen R."/>
            <person name="McCombie W.R."/>
        </authorList>
    </citation>
    <scope>NUCLEOTIDE SEQUENCE [LARGE SCALE GENOMIC DNA]</scope>
    <source>
        <strain>cv. Columbia</strain>
    </source>
</reference>
<reference key="3">
    <citation type="journal article" date="2017" name="Plant J.">
        <title>Araport11: a complete reannotation of the Arabidopsis thaliana reference genome.</title>
        <authorList>
            <person name="Cheng C.Y."/>
            <person name="Krishnakumar V."/>
            <person name="Chan A.P."/>
            <person name="Thibaud-Nissen F."/>
            <person name="Schobel S."/>
            <person name="Town C.D."/>
        </authorList>
    </citation>
    <scope>GENOME REANNOTATION</scope>
    <source>
        <strain>cv. Columbia</strain>
    </source>
</reference>
<reference key="4">
    <citation type="journal article" date="2010" name="Cell Host Microbe">
        <title>Receptor-like cytoplasmic kinases integrate signaling from multiple plant immune receptors and are targeted by a Pseudomonas syringae effector.</title>
        <authorList>
            <person name="Zhang J."/>
            <person name="Li W."/>
            <person name="Xiang T."/>
            <person name="Liu Z."/>
            <person name="Laluk K."/>
            <person name="Ding X."/>
            <person name="Zou Y."/>
            <person name="Gao M."/>
            <person name="Zhang X."/>
            <person name="Chen S."/>
            <person name="Mengiste T."/>
            <person name="Zhang Y."/>
            <person name="Zhou J.M."/>
        </authorList>
    </citation>
    <scope>GENE FAMILY</scope>
    <scope>NOMENCLATURE</scope>
</reference>
<name>PBL20_ARATH</name>
<feature type="chain" id="PRO_0000438612" description="Probable serine/threonine-protein kinase PBL20">
    <location>
        <begin position="1"/>
        <end position="388"/>
    </location>
</feature>
<feature type="domain" description="Protein kinase" evidence="3">
    <location>
        <begin position="91"/>
        <end position="372"/>
    </location>
</feature>
<feature type="active site" description="Proton acceptor" evidence="3">
    <location>
        <position position="221"/>
    </location>
</feature>
<feature type="binding site" evidence="3">
    <location>
        <begin position="97"/>
        <end position="105"/>
    </location>
    <ligand>
        <name>ATP</name>
        <dbReference type="ChEBI" id="CHEBI:30616"/>
    </ligand>
</feature>
<feature type="binding site" evidence="3">
    <location>
        <position position="128"/>
    </location>
    <ligand>
        <name>ATP</name>
        <dbReference type="ChEBI" id="CHEBI:30616"/>
    </ligand>
</feature>
<feature type="lipid moiety-binding region" description="S-palmitoyl cysteine" evidence="2">
    <location>
        <position position="3"/>
    </location>
</feature>
<accession>F4JPX3</accession>
<accession>O23606</accession>
<keyword id="KW-0067">ATP-binding</keyword>
<keyword id="KW-1003">Cell membrane</keyword>
<keyword id="KW-0418">Kinase</keyword>
<keyword id="KW-0449">Lipoprotein</keyword>
<keyword id="KW-0472">Membrane</keyword>
<keyword id="KW-0547">Nucleotide-binding</keyword>
<keyword id="KW-0564">Palmitate</keyword>
<keyword id="KW-0611">Plant defense</keyword>
<keyword id="KW-1185">Reference proteome</keyword>
<keyword id="KW-0723">Serine/threonine-protein kinase</keyword>
<keyword id="KW-0808">Transferase</keyword>
<proteinExistence type="inferred from homology"/>
<sequence>MNCLFLFMSKKPKSRGNMEKEKKNIRGREFLQKSAPELTTRKTTLSFNLPTPRSLPSPTSIKDLYTDREQNQNQNLRVFSFKELSDATCEFSRKLKIGEGGFGSVYKATINNPTVGDSHSSPLTVAVKKLNRQSLQGHKQWLAEVHFLGVVNHPNVVRLLGYCSEDRERLLVYELMSNRSLEDHLFTLRTLTLSWKQRLEIMLGAAQGLAYLHEIQVIYRDFKSSNVLLNEEFHPKLSDFGLAREGPEGDNTHVTTARVGTDGYAAPEYVITGHLKTHCDVYSFGVVLYEIITGRRTLERMKPLAEQKLLEWVKKYPINSKRFKMIVDSKLCNKYPIAMVRRVAKLADHCVNKIDKERPTMAFVVESLTNIIEESNSEDMGSSVGIRG</sequence>